<name>HTPX_PERMH</name>
<keyword id="KW-0997">Cell inner membrane</keyword>
<keyword id="KW-1003">Cell membrane</keyword>
<keyword id="KW-0378">Hydrolase</keyword>
<keyword id="KW-0472">Membrane</keyword>
<keyword id="KW-0479">Metal-binding</keyword>
<keyword id="KW-0482">Metalloprotease</keyword>
<keyword id="KW-0645">Protease</keyword>
<keyword id="KW-1185">Reference proteome</keyword>
<keyword id="KW-0812">Transmembrane</keyword>
<keyword id="KW-1133">Transmembrane helix</keyword>
<keyword id="KW-0862">Zinc</keyword>
<comment type="cofactor">
    <cofactor evidence="1">
        <name>Zn(2+)</name>
        <dbReference type="ChEBI" id="CHEBI:29105"/>
    </cofactor>
    <text evidence="1">Binds 1 zinc ion per subunit.</text>
</comment>
<comment type="subcellular location">
    <subcellularLocation>
        <location evidence="1">Cell inner membrane</location>
        <topology evidence="1">Multi-pass membrane protein</topology>
    </subcellularLocation>
</comment>
<comment type="similarity">
    <text evidence="1">Belongs to the peptidase M48B family.</text>
</comment>
<sequence>MHTIKTVLLLGVLTGLFLLAGKIIGGQTGMIIAFFFAMAMNFFAYWFSDKMALKMYRAQEIPYEEAPWLHDMVAELARNAGIPKPRIYLAPTEIPNAFATGRNPKNAVVAVTSGILNILSPEELRGVLAHEIAHIKNRDILISSIAATIGGAISMLAEMAFWSNIFGGNDEDNGIGGLIGSLLLFILAPIAAMIIQMAISRSREYAADATGAEICRCPLSLAKALEKLEMAAHQLAPVAAREVNPGTAHMMIVNPLKGSSIASLFSTHPPTEERIRRLYEMARRMGSV</sequence>
<accession>C0QPE1</accession>
<organism>
    <name type="scientific">Persephonella marina (strain DSM 14350 / EX-H1)</name>
    <dbReference type="NCBI Taxonomy" id="123214"/>
    <lineage>
        <taxon>Bacteria</taxon>
        <taxon>Pseudomonadati</taxon>
        <taxon>Aquificota</taxon>
        <taxon>Aquificia</taxon>
        <taxon>Aquificales</taxon>
        <taxon>Hydrogenothermaceae</taxon>
        <taxon>Persephonella</taxon>
    </lineage>
</organism>
<protein>
    <recommendedName>
        <fullName evidence="1">Protease HtpX homolog</fullName>
        <ecNumber evidence="1">3.4.24.-</ecNumber>
    </recommendedName>
</protein>
<evidence type="ECO:0000255" key="1">
    <source>
        <dbReference type="HAMAP-Rule" id="MF_00188"/>
    </source>
</evidence>
<reference key="1">
    <citation type="journal article" date="2009" name="J. Bacteriol.">
        <title>Complete and draft genome sequences of six members of the Aquificales.</title>
        <authorList>
            <person name="Reysenbach A.-L."/>
            <person name="Hamamura N."/>
            <person name="Podar M."/>
            <person name="Griffiths E."/>
            <person name="Ferreira S."/>
            <person name="Hochstein R."/>
            <person name="Heidelberg J."/>
            <person name="Johnson J."/>
            <person name="Mead D."/>
            <person name="Pohorille A."/>
            <person name="Sarmiento M."/>
            <person name="Schweighofer K."/>
            <person name="Seshadri R."/>
            <person name="Voytek M.A."/>
        </authorList>
    </citation>
    <scope>NUCLEOTIDE SEQUENCE [LARGE SCALE GENOMIC DNA]</scope>
    <source>
        <strain>DSM 14350 / EX-H1</strain>
    </source>
</reference>
<feature type="chain" id="PRO_1000124234" description="Protease HtpX homolog">
    <location>
        <begin position="1"/>
        <end position="288"/>
    </location>
</feature>
<feature type="transmembrane region" description="Helical" evidence="1">
    <location>
        <begin position="1"/>
        <end position="21"/>
    </location>
</feature>
<feature type="transmembrane region" description="Helical" evidence="1">
    <location>
        <begin position="23"/>
        <end position="43"/>
    </location>
</feature>
<feature type="transmembrane region" description="Helical" evidence="1">
    <location>
        <begin position="140"/>
        <end position="160"/>
    </location>
</feature>
<feature type="transmembrane region" description="Helical" evidence="1">
    <location>
        <begin position="175"/>
        <end position="195"/>
    </location>
</feature>
<feature type="active site" evidence="1">
    <location>
        <position position="131"/>
    </location>
</feature>
<feature type="binding site" evidence="1">
    <location>
        <position position="130"/>
    </location>
    <ligand>
        <name>Zn(2+)</name>
        <dbReference type="ChEBI" id="CHEBI:29105"/>
        <note>catalytic</note>
    </ligand>
</feature>
<feature type="binding site" evidence="1">
    <location>
        <position position="134"/>
    </location>
    <ligand>
        <name>Zn(2+)</name>
        <dbReference type="ChEBI" id="CHEBI:29105"/>
        <note>catalytic</note>
    </ligand>
</feature>
<feature type="binding site" evidence="1">
    <location>
        <position position="204"/>
    </location>
    <ligand>
        <name>Zn(2+)</name>
        <dbReference type="ChEBI" id="CHEBI:29105"/>
        <note>catalytic</note>
    </ligand>
</feature>
<dbReference type="EC" id="3.4.24.-" evidence="1"/>
<dbReference type="EMBL" id="CP001230">
    <property type="protein sequence ID" value="ACO03737.1"/>
    <property type="molecule type" value="Genomic_DNA"/>
</dbReference>
<dbReference type="RefSeq" id="WP_012675976.1">
    <property type="nucleotide sequence ID" value="NC_012440.1"/>
</dbReference>
<dbReference type="STRING" id="123214.PERMA_0749"/>
<dbReference type="PaxDb" id="123214-PERMA_0749"/>
<dbReference type="KEGG" id="pmx:PERMA_0749"/>
<dbReference type="eggNOG" id="COG0501">
    <property type="taxonomic scope" value="Bacteria"/>
</dbReference>
<dbReference type="HOGENOM" id="CLU_042266_3_0_0"/>
<dbReference type="OrthoDB" id="15218at2"/>
<dbReference type="Proteomes" id="UP000001366">
    <property type="component" value="Chromosome"/>
</dbReference>
<dbReference type="GO" id="GO:0005886">
    <property type="term" value="C:plasma membrane"/>
    <property type="evidence" value="ECO:0007669"/>
    <property type="project" value="UniProtKB-SubCell"/>
</dbReference>
<dbReference type="GO" id="GO:0004222">
    <property type="term" value="F:metalloendopeptidase activity"/>
    <property type="evidence" value="ECO:0007669"/>
    <property type="project" value="UniProtKB-UniRule"/>
</dbReference>
<dbReference type="GO" id="GO:0008270">
    <property type="term" value="F:zinc ion binding"/>
    <property type="evidence" value="ECO:0007669"/>
    <property type="project" value="UniProtKB-UniRule"/>
</dbReference>
<dbReference type="GO" id="GO:0006508">
    <property type="term" value="P:proteolysis"/>
    <property type="evidence" value="ECO:0007669"/>
    <property type="project" value="UniProtKB-KW"/>
</dbReference>
<dbReference type="CDD" id="cd07336">
    <property type="entry name" value="M48B_HtpX_like"/>
    <property type="match status" value="1"/>
</dbReference>
<dbReference type="Gene3D" id="3.30.2010.10">
    <property type="entry name" value="Metalloproteases ('zincins'), catalytic domain"/>
    <property type="match status" value="1"/>
</dbReference>
<dbReference type="HAMAP" id="MF_00188">
    <property type="entry name" value="Pept_M48_protease_HtpX"/>
    <property type="match status" value="1"/>
</dbReference>
<dbReference type="InterPro" id="IPR050083">
    <property type="entry name" value="HtpX_protease"/>
</dbReference>
<dbReference type="InterPro" id="IPR022919">
    <property type="entry name" value="Pept_M48_protease_HtpX"/>
</dbReference>
<dbReference type="InterPro" id="IPR001915">
    <property type="entry name" value="Peptidase_M48"/>
</dbReference>
<dbReference type="NCBIfam" id="NF002826">
    <property type="entry name" value="PRK03001.1"/>
    <property type="match status" value="1"/>
</dbReference>
<dbReference type="PANTHER" id="PTHR43221">
    <property type="entry name" value="PROTEASE HTPX"/>
    <property type="match status" value="1"/>
</dbReference>
<dbReference type="PANTHER" id="PTHR43221:SF1">
    <property type="entry name" value="PROTEASE HTPX"/>
    <property type="match status" value="1"/>
</dbReference>
<dbReference type="Pfam" id="PF01435">
    <property type="entry name" value="Peptidase_M48"/>
    <property type="match status" value="1"/>
</dbReference>
<proteinExistence type="inferred from homology"/>
<gene>
    <name evidence="1" type="primary">htpX</name>
    <name type="ordered locus">PERMA_0749</name>
</gene>